<name>ATPD_PSELT</name>
<organism>
    <name type="scientific">Pseudothermotoga lettingae (strain ATCC BAA-301 / DSM 14385 / NBRC 107922 / TMO)</name>
    <name type="common">Thermotoga lettingae</name>
    <dbReference type="NCBI Taxonomy" id="416591"/>
    <lineage>
        <taxon>Bacteria</taxon>
        <taxon>Thermotogati</taxon>
        <taxon>Thermotogota</taxon>
        <taxon>Thermotogae</taxon>
        <taxon>Thermotogales</taxon>
        <taxon>Thermotogaceae</taxon>
        <taxon>Pseudothermotoga</taxon>
    </lineage>
</organism>
<sequence length="182" mass="21157">MRYSQIAAKYARALLNVAVELEKTEEYGDILAVVVQLYQKAKQFFDDPTIGAAEHVDRITKFINQIGAHFDKPFWNFLKIVFEKRRQSVLPAILQYYKNMKIESEMKVPVFLTTAYELSEEELKVITDFVRKYTKRNPVFETRIDESLIAGVVIECEGKTFDASVAGRIRNVTRHVLQREVM</sequence>
<protein>
    <recommendedName>
        <fullName evidence="1">ATP synthase subunit delta</fullName>
    </recommendedName>
    <alternativeName>
        <fullName evidence="1">ATP synthase F(1) sector subunit delta</fullName>
    </alternativeName>
    <alternativeName>
        <fullName evidence="1">F-type ATPase subunit delta</fullName>
        <shortName evidence="1">F-ATPase subunit delta</shortName>
    </alternativeName>
</protein>
<keyword id="KW-0066">ATP synthesis</keyword>
<keyword id="KW-0997">Cell inner membrane</keyword>
<keyword id="KW-1003">Cell membrane</keyword>
<keyword id="KW-0139">CF(1)</keyword>
<keyword id="KW-0375">Hydrogen ion transport</keyword>
<keyword id="KW-0406">Ion transport</keyword>
<keyword id="KW-0472">Membrane</keyword>
<keyword id="KW-1185">Reference proteome</keyword>
<keyword id="KW-0813">Transport</keyword>
<gene>
    <name evidence="1" type="primary">atpH</name>
    <name type="ordered locus">Tlet_0163</name>
</gene>
<dbReference type="EMBL" id="CP000812">
    <property type="protein sequence ID" value="ABV32733.1"/>
    <property type="molecule type" value="Genomic_DNA"/>
</dbReference>
<dbReference type="RefSeq" id="WP_012002214.1">
    <property type="nucleotide sequence ID" value="NZ_BSDV01000001.1"/>
</dbReference>
<dbReference type="SMR" id="A8F3J9"/>
<dbReference type="STRING" id="416591.Tlet_0163"/>
<dbReference type="KEGG" id="tle:Tlet_0163"/>
<dbReference type="eggNOG" id="COG0712">
    <property type="taxonomic scope" value="Bacteria"/>
</dbReference>
<dbReference type="HOGENOM" id="CLU_085114_4_0_0"/>
<dbReference type="OrthoDB" id="9802471at2"/>
<dbReference type="Proteomes" id="UP000002016">
    <property type="component" value="Chromosome"/>
</dbReference>
<dbReference type="GO" id="GO:0005886">
    <property type="term" value="C:plasma membrane"/>
    <property type="evidence" value="ECO:0007669"/>
    <property type="project" value="UniProtKB-SubCell"/>
</dbReference>
<dbReference type="GO" id="GO:0045259">
    <property type="term" value="C:proton-transporting ATP synthase complex"/>
    <property type="evidence" value="ECO:0007669"/>
    <property type="project" value="UniProtKB-KW"/>
</dbReference>
<dbReference type="GO" id="GO:0046933">
    <property type="term" value="F:proton-transporting ATP synthase activity, rotational mechanism"/>
    <property type="evidence" value="ECO:0007669"/>
    <property type="project" value="UniProtKB-UniRule"/>
</dbReference>
<dbReference type="Gene3D" id="1.10.520.20">
    <property type="entry name" value="N-terminal domain of the delta subunit of the F1F0-ATP synthase"/>
    <property type="match status" value="1"/>
</dbReference>
<dbReference type="HAMAP" id="MF_01416">
    <property type="entry name" value="ATP_synth_delta_bact"/>
    <property type="match status" value="1"/>
</dbReference>
<dbReference type="InterPro" id="IPR026015">
    <property type="entry name" value="ATP_synth_OSCP/delta_N_sf"/>
</dbReference>
<dbReference type="InterPro" id="IPR000711">
    <property type="entry name" value="ATPase_OSCP/dsu"/>
</dbReference>
<dbReference type="NCBIfam" id="TIGR01145">
    <property type="entry name" value="ATP_synt_delta"/>
    <property type="match status" value="1"/>
</dbReference>
<dbReference type="NCBIfam" id="NF009976">
    <property type="entry name" value="PRK13441.1"/>
    <property type="match status" value="1"/>
</dbReference>
<dbReference type="PANTHER" id="PTHR11910">
    <property type="entry name" value="ATP SYNTHASE DELTA CHAIN"/>
    <property type="match status" value="1"/>
</dbReference>
<dbReference type="Pfam" id="PF00213">
    <property type="entry name" value="OSCP"/>
    <property type="match status" value="1"/>
</dbReference>
<dbReference type="PRINTS" id="PR00125">
    <property type="entry name" value="ATPASEDELTA"/>
</dbReference>
<dbReference type="SUPFAM" id="SSF47928">
    <property type="entry name" value="N-terminal domain of the delta subunit of the F1F0-ATP synthase"/>
    <property type="match status" value="1"/>
</dbReference>
<feature type="chain" id="PRO_0000371185" description="ATP synthase subunit delta">
    <location>
        <begin position="1"/>
        <end position="182"/>
    </location>
</feature>
<proteinExistence type="inferred from homology"/>
<reference key="1">
    <citation type="submission" date="2007-08" db="EMBL/GenBank/DDBJ databases">
        <title>Complete sequence of Thermotoga lettingae TMO.</title>
        <authorList>
            <consortium name="US DOE Joint Genome Institute"/>
            <person name="Copeland A."/>
            <person name="Lucas S."/>
            <person name="Lapidus A."/>
            <person name="Barry K."/>
            <person name="Glavina del Rio T."/>
            <person name="Dalin E."/>
            <person name="Tice H."/>
            <person name="Pitluck S."/>
            <person name="Foster B."/>
            <person name="Bruce D."/>
            <person name="Schmutz J."/>
            <person name="Larimer F."/>
            <person name="Land M."/>
            <person name="Hauser L."/>
            <person name="Kyrpides N."/>
            <person name="Mikhailova N."/>
            <person name="Nelson K."/>
            <person name="Gogarten J.P."/>
            <person name="Noll K."/>
            <person name="Richardson P."/>
        </authorList>
    </citation>
    <scope>NUCLEOTIDE SEQUENCE [LARGE SCALE GENOMIC DNA]</scope>
    <source>
        <strain>ATCC BAA-301 / DSM 14385 / NBRC 107922 / TMO</strain>
    </source>
</reference>
<accession>A8F3J9</accession>
<comment type="function">
    <text evidence="1">F(1)F(0) ATP synthase produces ATP from ADP in the presence of a proton or sodium gradient. F-type ATPases consist of two structural domains, F(1) containing the extramembraneous catalytic core and F(0) containing the membrane proton channel, linked together by a central stalk and a peripheral stalk. During catalysis, ATP synthesis in the catalytic domain of F(1) is coupled via a rotary mechanism of the central stalk subunits to proton translocation.</text>
</comment>
<comment type="function">
    <text evidence="1">This protein is part of the stalk that links CF(0) to CF(1). It either transmits conformational changes from CF(0) to CF(1) or is implicated in proton conduction.</text>
</comment>
<comment type="subunit">
    <text evidence="1">F-type ATPases have 2 components, F(1) - the catalytic core - and F(0) - the membrane proton channel. F(1) has five subunits: alpha(3), beta(3), gamma(1), delta(1), epsilon(1). F(0) has three main subunits: a(1), b(2) and c(10-14). The alpha and beta chains form an alternating ring which encloses part of the gamma chain. F(1) is attached to F(0) by a central stalk formed by the gamma and epsilon chains, while a peripheral stalk is formed by the delta and b chains.</text>
</comment>
<comment type="subcellular location">
    <subcellularLocation>
        <location evidence="1">Cell inner membrane</location>
        <topology evidence="1">Peripheral membrane protein</topology>
    </subcellularLocation>
</comment>
<comment type="similarity">
    <text evidence="1">Belongs to the ATPase delta chain family.</text>
</comment>
<evidence type="ECO:0000255" key="1">
    <source>
        <dbReference type="HAMAP-Rule" id="MF_01416"/>
    </source>
</evidence>